<protein>
    <recommendedName>
        <fullName>Putative UPF0401 protein YpjI</fullName>
    </recommendedName>
</protein>
<proteinExistence type="uncertain"/>
<reference key="1">
    <citation type="journal article" date="1997" name="Science">
        <title>The complete genome sequence of Escherichia coli K-12.</title>
        <authorList>
            <person name="Blattner F.R."/>
            <person name="Plunkett G. III"/>
            <person name="Bloch C.A."/>
            <person name="Perna N.T."/>
            <person name="Burland V."/>
            <person name="Riley M."/>
            <person name="Collado-Vides J."/>
            <person name="Glasner J.D."/>
            <person name="Rode C.K."/>
            <person name="Mayhew G.F."/>
            <person name="Gregor J."/>
            <person name="Davis N.W."/>
            <person name="Kirkpatrick H.A."/>
            <person name="Goeden M.A."/>
            <person name="Rose D.J."/>
            <person name="Mau B."/>
            <person name="Shao Y."/>
        </authorList>
    </citation>
    <scope>NUCLEOTIDE SEQUENCE [LARGE SCALE GENOMIC DNA]</scope>
    <source>
        <strain>K12 / MG1655 / ATCC 47076</strain>
    </source>
</reference>
<reference key="2">
    <citation type="unpublished observations" date="1999-01">
        <authorList>
            <person name="Rudd K.E."/>
        </authorList>
    </citation>
    <scope>IDENTIFICATION</scope>
    <scope>CONCEPTUAL TRANSLATION</scope>
</reference>
<reference key="3">
    <citation type="journal article" date="2006" name="Mol. Syst. Biol.">
        <title>Highly accurate genome sequences of Escherichia coli K-12 strains MG1655 and W3110.</title>
        <authorList>
            <person name="Hayashi K."/>
            <person name="Morooka N."/>
            <person name="Yamamoto Y."/>
            <person name="Fujita K."/>
            <person name="Isono K."/>
            <person name="Choi S."/>
            <person name="Ohtsubo E."/>
            <person name="Baba T."/>
            <person name="Wanner B.L."/>
            <person name="Mori H."/>
            <person name="Horiuchi T."/>
        </authorList>
    </citation>
    <scope>NUCLEOTIDE SEQUENCE [LARGE SCALE GENOMIC DNA]</scope>
    <source>
        <strain>K12 / W3110 / ATCC 27325 / DSM 5911</strain>
    </source>
</reference>
<organism>
    <name type="scientific">Escherichia coli (strain K12)</name>
    <dbReference type="NCBI Taxonomy" id="83333"/>
    <lineage>
        <taxon>Bacteria</taxon>
        <taxon>Pseudomonadati</taxon>
        <taxon>Pseudomonadota</taxon>
        <taxon>Gammaproteobacteria</taxon>
        <taxon>Enterobacterales</taxon>
        <taxon>Enterobacteriaceae</taxon>
        <taxon>Escherichia</taxon>
    </lineage>
</organism>
<comment type="similarity">
    <text evidence="1">Belongs to the UPF0401 family.</text>
</comment>
<comment type="caution">
    <text evidence="1">Could be the product of a pseudogene.</text>
</comment>
<comment type="sequence caution" evidence="1">
    <conflict type="erroneous termination">
        <sequence resource="EMBL" id="AP009048"/>
    </conflict>
    <text>Truncated C-terminus.</text>
</comment>
<comment type="sequence caution" evidence="1">
    <conflict type="frameshift">
        <sequence resource="EMBL" id="AP009048"/>
    </conflict>
</comment>
<comment type="sequence caution" evidence="1">
    <conflict type="erroneous termination">
        <sequence resource="EMBL" id="U00096"/>
    </conflict>
    <text>Truncated C-terminus.</text>
</comment>
<comment type="sequence caution" evidence="1">
    <conflict type="frameshift">
        <sequence resource="EMBL" id="U00096"/>
    </conflict>
</comment>
<feature type="chain" id="PRO_0000169289" description="Putative UPF0401 protein YpjI">
    <location>
        <begin position="1"/>
        <end position="90"/>
    </location>
</feature>
<evidence type="ECO:0000305" key="1"/>
<gene>
    <name type="primary">ypjI</name>
    <name type="ordered locus">b4644</name>
    <name type="ordered locus">JW2623.1</name>
    <name type="ORF">b2641.1</name>
</gene>
<accession>P58095</accession>
<keyword id="KW-1185">Reference proteome</keyword>
<sequence length="90" mass="10073">MSNSEGWXSFXQTLSGLPQWASADCVAGPLVSAGITDINIEDDQGIHVRLIVRDAEGRMVWRAWNFEPDAGEGFNRYIHRSGIRTDTFPR</sequence>
<name>YPJI_ECOLI</name>
<dbReference type="EMBL" id="U00096">
    <property type="status" value="NOT_ANNOTATED_CDS"/>
    <property type="molecule type" value="Genomic_DNA"/>
</dbReference>
<dbReference type="EMBL" id="AP009048">
    <property type="status" value="NOT_ANNOTATED_CDS"/>
    <property type="molecule type" value="Genomic_DNA"/>
</dbReference>
<dbReference type="FunCoup" id="P58095">
    <property type="interactions" value="5"/>
</dbReference>
<dbReference type="InParanoid" id="P58095"/>
<dbReference type="PhylomeDB" id="P58095"/>
<dbReference type="Proteomes" id="UP000000625">
    <property type="component" value="Chromosome"/>
</dbReference>
<dbReference type="Gene3D" id="3.30.160.130">
    <property type="entry name" value="ykff protein like domains"/>
    <property type="match status" value="1"/>
</dbReference>
<dbReference type="InterPro" id="IPR009253">
    <property type="entry name" value="DUF905"/>
</dbReference>
<dbReference type="InterPro" id="IPR038612">
    <property type="entry name" value="YkfF-like_sf"/>
</dbReference>
<dbReference type="Pfam" id="PF06006">
    <property type="entry name" value="DUF905"/>
    <property type="match status" value="1"/>
</dbReference>
<dbReference type="SUPFAM" id="SSF54786">
    <property type="entry name" value="YcfA/nrd intein domain"/>
    <property type="match status" value="1"/>
</dbReference>